<reference key="1">
    <citation type="journal article" date="2007" name="BMC Genomics">
        <title>The full-ORF clone resource of the German cDNA consortium.</title>
        <authorList>
            <person name="Bechtel S."/>
            <person name="Rosenfelder H."/>
            <person name="Duda A."/>
            <person name="Schmidt C.P."/>
            <person name="Ernst U."/>
            <person name="Wellenreuther R."/>
            <person name="Mehrle A."/>
            <person name="Schuster C."/>
            <person name="Bahr A."/>
            <person name="Bloecker H."/>
            <person name="Heubner D."/>
            <person name="Hoerlein A."/>
            <person name="Michel G."/>
            <person name="Wedler H."/>
            <person name="Koehrer K."/>
            <person name="Ottenwaelder B."/>
            <person name="Poustka A."/>
            <person name="Wiemann S."/>
            <person name="Schupp I."/>
        </authorList>
    </citation>
    <scope>NUCLEOTIDE SEQUENCE [LARGE SCALE MRNA] (ISOFORM 2)</scope>
</reference>
<reference key="2">
    <citation type="journal article" date="2004" name="Nature">
        <title>The DNA sequence and comparative analysis of human chromosome 10.</title>
        <authorList>
            <person name="Deloukas P."/>
            <person name="Earthrowl M.E."/>
            <person name="Grafham D.V."/>
            <person name="Rubenfield M."/>
            <person name="French L."/>
            <person name="Steward C.A."/>
            <person name="Sims S.K."/>
            <person name="Jones M.C."/>
            <person name="Searle S."/>
            <person name="Scott C."/>
            <person name="Howe K."/>
            <person name="Hunt S.E."/>
            <person name="Andrews T.D."/>
            <person name="Gilbert J.G.R."/>
            <person name="Swarbreck D."/>
            <person name="Ashurst J.L."/>
            <person name="Taylor A."/>
            <person name="Battles J."/>
            <person name="Bird C.P."/>
            <person name="Ainscough R."/>
            <person name="Almeida J.P."/>
            <person name="Ashwell R.I.S."/>
            <person name="Ambrose K.D."/>
            <person name="Babbage A.K."/>
            <person name="Bagguley C.L."/>
            <person name="Bailey J."/>
            <person name="Banerjee R."/>
            <person name="Bates K."/>
            <person name="Beasley H."/>
            <person name="Bray-Allen S."/>
            <person name="Brown A.J."/>
            <person name="Brown J.Y."/>
            <person name="Burford D.C."/>
            <person name="Burrill W."/>
            <person name="Burton J."/>
            <person name="Cahill P."/>
            <person name="Camire D."/>
            <person name="Carter N.P."/>
            <person name="Chapman J.C."/>
            <person name="Clark S.Y."/>
            <person name="Clarke G."/>
            <person name="Clee C.M."/>
            <person name="Clegg S."/>
            <person name="Corby N."/>
            <person name="Coulson A."/>
            <person name="Dhami P."/>
            <person name="Dutta I."/>
            <person name="Dunn M."/>
            <person name="Faulkner L."/>
            <person name="Frankish A."/>
            <person name="Frankland J.A."/>
            <person name="Garner P."/>
            <person name="Garnett J."/>
            <person name="Gribble S."/>
            <person name="Griffiths C."/>
            <person name="Grocock R."/>
            <person name="Gustafson E."/>
            <person name="Hammond S."/>
            <person name="Harley J.L."/>
            <person name="Hart E."/>
            <person name="Heath P.D."/>
            <person name="Ho T.P."/>
            <person name="Hopkins B."/>
            <person name="Horne J."/>
            <person name="Howden P.J."/>
            <person name="Huckle E."/>
            <person name="Hynds C."/>
            <person name="Johnson C."/>
            <person name="Johnson D."/>
            <person name="Kana A."/>
            <person name="Kay M."/>
            <person name="Kimberley A.M."/>
            <person name="Kershaw J.K."/>
            <person name="Kokkinaki M."/>
            <person name="Laird G.K."/>
            <person name="Lawlor S."/>
            <person name="Lee H.M."/>
            <person name="Leongamornlert D.A."/>
            <person name="Laird G."/>
            <person name="Lloyd C."/>
            <person name="Lloyd D.M."/>
            <person name="Loveland J."/>
            <person name="Lovell J."/>
            <person name="McLaren S."/>
            <person name="McLay K.E."/>
            <person name="McMurray A."/>
            <person name="Mashreghi-Mohammadi M."/>
            <person name="Matthews L."/>
            <person name="Milne S."/>
            <person name="Nickerson T."/>
            <person name="Nguyen M."/>
            <person name="Overton-Larty E."/>
            <person name="Palmer S.A."/>
            <person name="Pearce A.V."/>
            <person name="Peck A.I."/>
            <person name="Pelan S."/>
            <person name="Phillimore B."/>
            <person name="Porter K."/>
            <person name="Rice C.M."/>
            <person name="Rogosin A."/>
            <person name="Ross M.T."/>
            <person name="Sarafidou T."/>
            <person name="Sehra H.K."/>
            <person name="Shownkeen R."/>
            <person name="Skuce C.D."/>
            <person name="Smith M."/>
            <person name="Standring L."/>
            <person name="Sycamore N."/>
            <person name="Tester J."/>
            <person name="Thorpe A."/>
            <person name="Torcasso W."/>
            <person name="Tracey A."/>
            <person name="Tromans A."/>
            <person name="Tsolas J."/>
            <person name="Wall M."/>
            <person name="Walsh J."/>
            <person name="Wang H."/>
            <person name="Weinstock K."/>
            <person name="West A.P."/>
            <person name="Willey D.L."/>
            <person name="Whitehead S.L."/>
            <person name="Wilming L."/>
            <person name="Wray P.W."/>
            <person name="Young L."/>
            <person name="Chen Y."/>
            <person name="Lovering R.C."/>
            <person name="Moschonas N.K."/>
            <person name="Siebert R."/>
            <person name="Fechtel K."/>
            <person name="Bentley D."/>
            <person name="Durbin R.M."/>
            <person name="Hubbard T."/>
            <person name="Doucette-Stamm L."/>
            <person name="Beck S."/>
            <person name="Smith D.R."/>
            <person name="Rogers J."/>
        </authorList>
    </citation>
    <scope>NUCLEOTIDE SEQUENCE [LARGE SCALE GENOMIC DNA]</scope>
</reference>
<comment type="function">
    <text evidence="2">May be required for sperm motility and function.</text>
</comment>
<comment type="catalytic activity">
    <reaction evidence="2">
        <text>(2R)-2-phosphoglycerate = phosphoenolpyruvate + H2O</text>
        <dbReference type="Rhea" id="RHEA:10164"/>
        <dbReference type="ChEBI" id="CHEBI:15377"/>
        <dbReference type="ChEBI" id="CHEBI:58289"/>
        <dbReference type="ChEBI" id="CHEBI:58702"/>
        <dbReference type="EC" id="4.2.1.11"/>
    </reaction>
</comment>
<comment type="pathway">
    <text evidence="2">Carbohydrate degradation; glycolysis; pyruvate from D-glyceraldehyde 3-phosphate: step 4/5.</text>
</comment>
<comment type="subunit">
    <text evidence="2">Interacts with ENO1 and AKAP4.</text>
</comment>
<comment type="alternative products">
    <event type="alternative splicing"/>
    <isoform>
        <id>A6NNW6-3</id>
        <name>3</name>
        <sequence type="displayed"/>
    </isoform>
    <isoform>
        <id>A6NNW6-2</id>
        <name>2</name>
        <sequence type="described" ref="VSP_059947 VSP_059948"/>
    </isoform>
    <isoform>
        <id>A6NNW6-4</id>
        <name>4</name>
        <sequence type="described" ref="VSP_059949 VSP_059951 VSP_059950"/>
    </isoform>
</comment>
<comment type="PTM">
    <text evidence="2">Synthesized as an approximately 70-kDa precursor, which then undergoes proteolytic cleavage to an approximately 60-kDa enzyme; HOATZ associates directly or indirectly with ENO4 to mediate this process before its transport to mature flagella.</text>
</comment>
<comment type="similarity">
    <text evidence="4">Belongs to the enolase family.</text>
</comment>
<comment type="caution">
    <text evidence="4">Although it belongs to the enolase family, Leu-362 is present instead of the conserved Glu which is expected to be an active site residue.</text>
</comment>
<feature type="chain" id="PRO_0000348454" description="Enolase 4">
    <location>
        <begin position="1"/>
        <end position="625"/>
    </location>
</feature>
<feature type="region of interest" description="Disordered" evidence="3">
    <location>
        <begin position="184"/>
        <end position="226"/>
    </location>
</feature>
<feature type="region of interest" description="Disordered" evidence="3">
    <location>
        <begin position="331"/>
        <end position="350"/>
    </location>
</feature>
<feature type="region of interest" description="Disordered" evidence="3">
    <location>
        <begin position="604"/>
        <end position="625"/>
    </location>
</feature>
<feature type="compositionally biased region" description="Pro residues" evidence="3">
    <location>
        <begin position="189"/>
        <end position="203"/>
    </location>
</feature>
<feature type="compositionally biased region" description="Basic and acidic residues" evidence="3">
    <location>
        <begin position="336"/>
        <end position="346"/>
    </location>
</feature>
<feature type="active site" description="Proton acceptor" evidence="1">
    <location>
        <position position="497"/>
    </location>
</feature>
<feature type="binding site" evidence="1">
    <location>
        <position position="300"/>
    </location>
    <ligand>
        <name>substrate</name>
    </ligand>
</feature>
<feature type="binding site" evidence="1">
    <location>
        <position position="548"/>
    </location>
    <ligand>
        <name>substrate</name>
    </ligand>
</feature>
<feature type="splice variant" id="VSP_059949" description="In isoform 4.">
    <location>
        <begin position="1"/>
        <end position="235"/>
    </location>
</feature>
<feature type="splice variant" id="VSP_059947" description="In isoform 2.">
    <location>
        <begin position="56"/>
        <end position="330"/>
    </location>
</feature>
<feature type="splice variant" id="VSP_059948" description="In isoform 2.">
    <original>NKGKYEVIMGTYKNAAEMVDLYVDLINKYPSIIALIDPFRKED</original>
    <variation>D</variation>
    <location>
        <begin position="406"/>
        <end position="448"/>
    </location>
</feature>
<feature type="splice variant" id="VSP_059951" description="In isoform 4.">
    <original>GFKEEHTFFYFNEEAEKAAEALEA</original>
    <variation>ATSSSSCDARIGGQEQETMTLVKV</variation>
    <location>
        <begin position="575"/>
        <end position="598"/>
    </location>
</feature>
<feature type="splice variant" id="VSP_059950" description="In isoform 4.">
    <location>
        <begin position="599"/>
        <end position="625"/>
    </location>
</feature>
<feature type="sequence conflict" description="In Ref. 1; BX647301." evidence="4" ref="1">
    <original>V</original>
    <variation>I</variation>
    <location>
        <position position="32"/>
    </location>
</feature>
<name>ENO4_HUMAN</name>
<organism>
    <name type="scientific">Homo sapiens</name>
    <name type="common">Human</name>
    <dbReference type="NCBI Taxonomy" id="9606"/>
    <lineage>
        <taxon>Eukaryota</taxon>
        <taxon>Metazoa</taxon>
        <taxon>Chordata</taxon>
        <taxon>Craniata</taxon>
        <taxon>Vertebrata</taxon>
        <taxon>Euteleostomi</taxon>
        <taxon>Mammalia</taxon>
        <taxon>Eutheria</taxon>
        <taxon>Euarchontoglires</taxon>
        <taxon>Primates</taxon>
        <taxon>Haplorrhini</taxon>
        <taxon>Catarrhini</taxon>
        <taxon>Hominidae</taxon>
        <taxon>Homo</taxon>
    </lineage>
</organism>
<proteinExistence type="evidence at protein level"/>
<dbReference type="EC" id="4.2.1.11" evidence="2"/>
<dbReference type="EMBL" id="BX647301">
    <property type="status" value="NOT_ANNOTATED_CDS"/>
    <property type="molecule type" value="mRNA"/>
</dbReference>
<dbReference type="EMBL" id="AC023283">
    <property type="status" value="NOT_ANNOTATED_CDS"/>
    <property type="molecule type" value="Genomic_DNA"/>
</dbReference>
<dbReference type="CCDS" id="CCDS73206.1">
    <molecule id="A6NNW6-3"/>
</dbReference>
<dbReference type="RefSeq" id="NP_001229628.1">
    <molecule id="A6NNW6-3"/>
    <property type="nucleotide sequence ID" value="NM_001242699.2"/>
</dbReference>
<dbReference type="SMR" id="A6NNW6"/>
<dbReference type="FunCoup" id="A6NNW6">
    <property type="interactions" value="328"/>
</dbReference>
<dbReference type="IntAct" id="A6NNW6">
    <property type="interactions" value="2"/>
</dbReference>
<dbReference type="STRING" id="9606.ENSP00000345555"/>
<dbReference type="iPTMnet" id="A6NNW6"/>
<dbReference type="PhosphoSitePlus" id="A6NNW6"/>
<dbReference type="BioMuta" id="ENO4"/>
<dbReference type="jPOST" id="A6NNW6"/>
<dbReference type="MassIVE" id="A6NNW6"/>
<dbReference type="PaxDb" id="9606-ENSP00000345555"/>
<dbReference type="PeptideAtlas" id="A6NNW6"/>
<dbReference type="ProteomicsDB" id="1254"/>
<dbReference type="ProteomicsDB" id="1644">
    <molecule id="A6NNW6-2"/>
</dbReference>
<dbReference type="Antibodypedia" id="49029">
    <property type="antibodies" value="76 antibodies from 13 providers"/>
</dbReference>
<dbReference type="DNASU" id="387712"/>
<dbReference type="Ensembl" id="ENST00000341276.11">
    <molecule id="A6NNW6-3"/>
    <property type="protein sequence ID" value="ENSP00000345555.6"/>
    <property type="gene ID" value="ENSG00000188316.16"/>
</dbReference>
<dbReference type="Ensembl" id="ENST00000409522.5">
    <molecule id="A6NNW6-2"/>
    <property type="protein sequence ID" value="ENSP00000387194.1"/>
    <property type="gene ID" value="ENSG00000188316.16"/>
</dbReference>
<dbReference type="GeneID" id="387712"/>
<dbReference type="KEGG" id="hsa:387712"/>
<dbReference type="MANE-Select" id="ENST00000341276.11">
    <property type="protein sequence ID" value="ENSP00000345555.6"/>
    <property type="RefSeq nucleotide sequence ID" value="NM_001242699.2"/>
    <property type="RefSeq protein sequence ID" value="NP_001229628.1"/>
</dbReference>
<dbReference type="UCSC" id="uc001lcw.4">
    <molecule id="A6NNW6-3"/>
    <property type="organism name" value="human"/>
</dbReference>
<dbReference type="UCSC" id="uc057wfb.1">
    <property type="organism name" value="human"/>
</dbReference>
<dbReference type="UCSC" id="uc057wfd.1">
    <property type="organism name" value="human"/>
</dbReference>
<dbReference type="AGR" id="HGNC:31670"/>
<dbReference type="CTD" id="387712"/>
<dbReference type="DisGeNET" id="387712"/>
<dbReference type="GeneCards" id="ENO4"/>
<dbReference type="HGNC" id="HGNC:31670">
    <property type="gene designation" value="ENO4"/>
</dbReference>
<dbReference type="HPA" id="ENSG00000188316">
    <property type="expression patterns" value="Tissue enhanced (choroid plexus, fallopian tube)"/>
</dbReference>
<dbReference type="MIM" id="131375">
    <property type="type" value="gene"/>
</dbReference>
<dbReference type="neXtProt" id="NX_A6NNW6"/>
<dbReference type="OpenTargets" id="ENSG00000188316"/>
<dbReference type="VEuPathDB" id="HostDB:ENSG00000188316"/>
<dbReference type="eggNOG" id="KOG2670">
    <property type="taxonomic scope" value="Eukaryota"/>
</dbReference>
<dbReference type="GeneTree" id="ENSGT00950000182805"/>
<dbReference type="HOGENOM" id="CLU_1079780_0_0_1"/>
<dbReference type="InParanoid" id="A6NNW6"/>
<dbReference type="OMA" id="MKELICI"/>
<dbReference type="OrthoDB" id="10009078at2759"/>
<dbReference type="PAN-GO" id="A6NNW6">
    <property type="GO annotations" value="3 GO annotations based on evolutionary models"/>
</dbReference>
<dbReference type="PhylomeDB" id="A6NNW6"/>
<dbReference type="TreeFam" id="TF354238"/>
<dbReference type="PathwayCommons" id="A6NNW6"/>
<dbReference type="Reactome" id="R-HSA-70171">
    <property type="pathway name" value="Glycolysis"/>
</dbReference>
<dbReference type="Reactome" id="R-HSA-70263">
    <property type="pathway name" value="Gluconeogenesis"/>
</dbReference>
<dbReference type="SignaLink" id="A6NNW6"/>
<dbReference type="UniPathway" id="UPA00109">
    <property type="reaction ID" value="UER00187"/>
</dbReference>
<dbReference type="BioGRID-ORCS" id="387712">
    <property type="hits" value="9 hits in 354 CRISPR screens"/>
</dbReference>
<dbReference type="ChiTaRS" id="ENO4">
    <property type="organism name" value="human"/>
</dbReference>
<dbReference type="GenomeRNAi" id="387712"/>
<dbReference type="Pharos" id="A6NNW6">
    <property type="development level" value="Tbio"/>
</dbReference>
<dbReference type="PRO" id="PR:A6NNW6"/>
<dbReference type="Proteomes" id="UP000005640">
    <property type="component" value="Chromosome 10"/>
</dbReference>
<dbReference type="RNAct" id="A6NNW6">
    <property type="molecule type" value="protein"/>
</dbReference>
<dbReference type="Bgee" id="ENSG00000188316">
    <property type="expression patterns" value="Expressed in male germ line stem cell (sensu Vertebrata) in testis and 87 other cell types or tissues"/>
</dbReference>
<dbReference type="ExpressionAtlas" id="A6NNW6">
    <property type="expression patterns" value="baseline and differential"/>
</dbReference>
<dbReference type="GO" id="GO:0000015">
    <property type="term" value="C:phosphopyruvate hydratase complex"/>
    <property type="evidence" value="ECO:0000318"/>
    <property type="project" value="GO_Central"/>
</dbReference>
<dbReference type="GO" id="GO:0000287">
    <property type="term" value="F:magnesium ion binding"/>
    <property type="evidence" value="ECO:0007669"/>
    <property type="project" value="InterPro"/>
</dbReference>
<dbReference type="GO" id="GO:0004634">
    <property type="term" value="F:phosphopyruvate hydratase activity"/>
    <property type="evidence" value="ECO:0000318"/>
    <property type="project" value="GO_Central"/>
</dbReference>
<dbReference type="GO" id="GO:0006096">
    <property type="term" value="P:glycolytic process"/>
    <property type="evidence" value="ECO:0000318"/>
    <property type="project" value="GO_Central"/>
</dbReference>
<dbReference type="CDD" id="cd22974">
    <property type="entry name" value="DD_ENO4"/>
    <property type="match status" value="1"/>
</dbReference>
<dbReference type="Gene3D" id="3.20.20.120">
    <property type="entry name" value="Enolase-like C-terminal domain"/>
    <property type="match status" value="1"/>
</dbReference>
<dbReference type="Gene3D" id="3.30.390.10">
    <property type="entry name" value="Enolase-like, N-terminal domain"/>
    <property type="match status" value="1"/>
</dbReference>
<dbReference type="InterPro" id="IPR047500">
    <property type="entry name" value="DD_ENO4"/>
</dbReference>
<dbReference type="InterPro" id="IPR000941">
    <property type="entry name" value="Enolase"/>
</dbReference>
<dbReference type="InterPro" id="IPR036849">
    <property type="entry name" value="Enolase-like_C_sf"/>
</dbReference>
<dbReference type="InterPro" id="IPR029017">
    <property type="entry name" value="Enolase-like_N"/>
</dbReference>
<dbReference type="InterPro" id="IPR020810">
    <property type="entry name" value="Enolase_C"/>
</dbReference>
<dbReference type="InterPro" id="IPR020811">
    <property type="entry name" value="Enolase_N"/>
</dbReference>
<dbReference type="PANTHER" id="PTHR11902">
    <property type="entry name" value="ENOLASE"/>
    <property type="match status" value="1"/>
</dbReference>
<dbReference type="PANTHER" id="PTHR11902:SF30">
    <property type="entry name" value="ENOLASE 4"/>
    <property type="match status" value="1"/>
</dbReference>
<dbReference type="Pfam" id="PF00113">
    <property type="entry name" value="Enolase_C"/>
    <property type="match status" value="1"/>
</dbReference>
<dbReference type="SMART" id="SM01192">
    <property type="entry name" value="Enolase_C"/>
    <property type="match status" value="1"/>
</dbReference>
<dbReference type="SMART" id="SM01193">
    <property type="entry name" value="Enolase_N"/>
    <property type="match status" value="1"/>
</dbReference>
<dbReference type="SUPFAM" id="SSF51604">
    <property type="entry name" value="Enolase C-terminal domain-like"/>
    <property type="match status" value="1"/>
</dbReference>
<dbReference type="SUPFAM" id="SSF54826">
    <property type="entry name" value="Enolase N-terminal domain-like"/>
    <property type="match status" value="1"/>
</dbReference>
<keyword id="KW-0025">Alternative splicing</keyword>
<keyword id="KW-0324">Glycolysis</keyword>
<keyword id="KW-0456">Lyase</keyword>
<keyword id="KW-1267">Proteomics identification</keyword>
<keyword id="KW-1185">Reference proteome</keyword>
<protein>
    <recommendedName>
        <fullName evidence="4">Enolase 4</fullName>
        <ecNumber evidence="2">4.2.1.11</ecNumber>
    </recommendedName>
    <alternativeName>
        <fullName>2-phospho-D-glycerate hydro-lyase</fullName>
    </alternativeName>
</protein>
<accession>A6NNW6</accession>
<accession>A0A087WZY6</accession>
<accession>A6NI74</accession>
<accession>B8ZZN9</accession>
<accession>J3KNX1</accession>
<evidence type="ECO:0000250" key="1"/>
<evidence type="ECO:0000250" key="2">
    <source>
        <dbReference type="UniProtKB" id="Q8C042"/>
    </source>
</evidence>
<evidence type="ECO:0000256" key="3">
    <source>
        <dbReference type="SAM" id="MobiDB-lite"/>
    </source>
</evidence>
<evidence type="ECO:0000305" key="4"/>
<evidence type="ECO:0000312" key="5">
    <source>
        <dbReference type="HGNC" id="HGNC:31670"/>
    </source>
</evidence>
<sequence length="625" mass="68465">MEEEGGGRSCGTTRELQKLKQQAMEYYRENDVPRRLEELLNSTFYLQPADVYGHLANCFSKLAKPPTICKIVGKDVLDGLGLPTLQVDIFCTIQNFPKNVCSVVISTHFEVHENALPELAKAEEAERASAVSTAVQWVNSTITHELQGMAPSDQAEVDHLLRIFFASKVQEDKGRKELEKSLEYSTVPTPLPPVPPPPPPPPPTKKKGQKPGRKDTITEKPIAPAEPVEPVLSGSMAIGAVSLAVAKACAMLLNKPLYLNIALLKHNQEQPTTLSMPLLMVSLVSCGKSSSGKLNLMKEVICIPHPELTTKQGVEMLMEMQKHINKIIEMPSPPKAETKKGHDGSKRGQQQITGKMSHLGCLTINCDSIEQPLLLIQEICANLGLELGTNLHLAINCAGHELMDYNKGKYEVIMGTYKNAAEMVDLYVDLINKYPSIIALIDPFRKEDSEQWDSIYHALGSRCYIIAGTASKSISKLLEQGNISIPKSNGLIIKHTNQTTMSDLVEITNLIDSKKHITVFGSTEGESSDDSLVDLAVGLGVRFIKLGGLSRGERVTKYNRLLTIEEELVQNGTLGFKEEHTFFYFNEEAEKAAEALEAAAAREPLVPTFPTQGVEESAETGASSG</sequence>
<gene>
    <name evidence="5" type="primary">ENO4</name>
    <name type="synonym">C10orf134</name>
</gene>